<organism>
    <name type="scientific">Geobacter metallireducens (strain ATCC 53774 / DSM 7210 / GS-15)</name>
    <dbReference type="NCBI Taxonomy" id="269799"/>
    <lineage>
        <taxon>Bacteria</taxon>
        <taxon>Pseudomonadati</taxon>
        <taxon>Thermodesulfobacteriota</taxon>
        <taxon>Desulfuromonadia</taxon>
        <taxon>Geobacterales</taxon>
        <taxon>Geobacteraceae</taxon>
        <taxon>Geobacter</taxon>
    </lineage>
</organism>
<reference key="1">
    <citation type="journal article" date="2009" name="BMC Microbiol.">
        <title>The genome sequence of Geobacter metallireducens: features of metabolism, physiology and regulation common and dissimilar to Geobacter sulfurreducens.</title>
        <authorList>
            <person name="Aklujkar M."/>
            <person name="Krushkal J."/>
            <person name="DiBartolo G."/>
            <person name="Lapidus A."/>
            <person name="Land M.L."/>
            <person name="Lovley D.R."/>
        </authorList>
    </citation>
    <scope>NUCLEOTIDE SEQUENCE [LARGE SCALE GENOMIC DNA]</scope>
    <source>
        <strain>ATCC 53774 / DSM 7210 / GS-15</strain>
    </source>
</reference>
<comment type="catalytic activity">
    <reaction evidence="1">
        <text>2-(N(omega)-L-arginino)succinate = fumarate + L-arginine</text>
        <dbReference type="Rhea" id="RHEA:24020"/>
        <dbReference type="ChEBI" id="CHEBI:29806"/>
        <dbReference type="ChEBI" id="CHEBI:32682"/>
        <dbReference type="ChEBI" id="CHEBI:57472"/>
        <dbReference type="EC" id="4.3.2.1"/>
    </reaction>
</comment>
<comment type="pathway">
    <text evidence="1">Amino-acid biosynthesis; L-arginine biosynthesis; L-arginine from L-ornithine and carbamoyl phosphate: step 3/3.</text>
</comment>
<comment type="subcellular location">
    <subcellularLocation>
        <location evidence="1">Cytoplasm</location>
    </subcellularLocation>
</comment>
<comment type="similarity">
    <text evidence="1">Belongs to the lyase 1 family. Argininosuccinate lyase subfamily.</text>
</comment>
<sequence>MTHEKLWGGRFSEPTDKFVEEFTASIDFDKRLYHQDIRGSIAHARMLGKQGIIPMEDVEKITAGLQEILRQIQGGQFKFSVALEDIHMNIEARLSEKIGEAGKRLHTGRSRNDQVALDIRLYLRDEIVEVSAYLDLLVDSLISQAEKNLGVIMPGYTHLQTAQPILFSHHMMAYVEMFSRDKGRMEDCLRRMNVLPLGAGALAGTTFPIDREHVAEILDFPEVTRNSLDSVSDRDFALEFMAASSILMMHLSRFSEELILWSTSEFKFVDLSDSFCTGSSIMPQKKNPDVPELVRGKTGRVYGNLMALLTVMKALPLAYNKDMQEDKEPLFDTIDTVKGSLKIFADMVGEMRINTGNMRAAAAKGFSTATDVADYLVRKGMPFRDAHEVVGKTVAYCLSNGKDLPDLTLGEWQGFSDKIGEDIFGCITLEASVNARSATGGTALERVKAEIARVKAGR</sequence>
<accession>Q39Z69</accession>
<feature type="chain" id="PRO_0000240732" description="Argininosuccinate lyase">
    <location>
        <begin position="1"/>
        <end position="458"/>
    </location>
</feature>
<protein>
    <recommendedName>
        <fullName evidence="1">Argininosuccinate lyase</fullName>
        <shortName evidence="1">ASAL</shortName>
        <ecNumber evidence="1">4.3.2.1</ecNumber>
    </recommendedName>
    <alternativeName>
        <fullName evidence="1">Arginosuccinase</fullName>
    </alternativeName>
</protein>
<dbReference type="EC" id="4.3.2.1" evidence="1"/>
<dbReference type="EMBL" id="CP000148">
    <property type="protein sequence ID" value="ABB30455.1"/>
    <property type="molecule type" value="Genomic_DNA"/>
</dbReference>
<dbReference type="RefSeq" id="WP_004512798.1">
    <property type="nucleotide sequence ID" value="NC_007517.1"/>
</dbReference>
<dbReference type="SMR" id="Q39Z69"/>
<dbReference type="STRING" id="269799.Gmet_0209"/>
<dbReference type="KEGG" id="gme:Gmet_0209"/>
<dbReference type="eggNOG" id="COG0165">
    <property type="taxonomic scope" value="Bacteria"/>
</dbReference>
<dbReference type="HOGENOM" id="CLU_027272_2_3_7"/>
<dbReference type="UniPathway" id="UPA00068">
    <property type="reaction ID" value="UER00114"/>
</dbReference>
<dbReference type="Proteomes" id="UP000007073">
    <property type="component" value="Chromosome"/>
</dbReference>
<dbReference type="GO" id="GO:0005829">
    <property type="term" value="C:cytosol"/>
    <property type="evidence" value="ECO:0007669"/>
    <property type="project" value="TreeGrafter"/>
</dbReference>
<dbReference type="GO" id="GO:0004056">
    <property type="term" value="F:argininosuccinate lyase activity"/>
    <property type="evidence" value="ECO:0007669"/>
    <property type="project" value="UniProtKB-UniRule"/>
</dbReference>
<dbReference type="GO" id="GO:0042450">
    <property type="term" value="P:arginine biosynthetic process via ornithine"/>
    <property type="evidence" value="ECO:0007669"/>
    <property type="project" value="InterPro"/>
</dbReference>
<dbReference type="GO" id="GO:0006526">
    <property type="term" value="P:L-arginine biosynthetic process"/>
    <property type="evidence" value="ECO:0007669"/>
    <property type="project" value="UniProtKB-UniRule"/>
</dbReference>
<dbReference type="CDD" id="cd01359">
    <property type="entry name" value="Argininosuccinate_lyase"/>
    <property type="match status" value="1"/>
</dbReference>
<dbReference type="FunFam" id="1.10.275.10:FF:000002">
    <property type="entry name" value="Argininosuccinate lyase"/>
    <property type="match status" value="1"/>
</dbReference>
<dbReference type="FunFam" id="1.10.40.30:FF:000001">
    <property type="entry name" value="Argininosuccinate lyase"/>
    <property type="match status" value="1"/>
</dbReference>
<dbReference type="FunFam" id="1.20.200.10:FF:000002">
    <property type="entry name" value="Argininosuccinate lyase"/>
    <property type="match status" value="1"/>
</dbReference>
<dbReference type="Gene3D" id="1.10.40.30">
    <property type="entry name" value="Fumarase/aspartase (C-terminal domain)"/>
    <property type="match status" value="1"/>
</dbReference>
<dbReference type="Gene3D" id="1.20.200.10">
    <property type="entry name" value="Fumarase/aspartase (Central domain)"/>
    <property type="match status" value="1"/>
</dbReference>
<dbReference type="Gene3D" id="1.10.275.10">
    <property type="entry name" value="Fumarase/aspartase (N-terminal domain)"/>
    <property type="match status" value="1"/>
</dbReference>
<dbReference type="HAMAP" id="MF_00006">
    <property type="entry name" value="Arg_succ_lyase"/>
    <property type="match status" value="1"/>
</dbReference>
<dbReference type="InterPro" id="IPR029419">
    <property type="entry name" value="Arg_succ_lyase_C"/>
</dbReference>
<dbReference type="InterPro" id="IPR009049">
    <property type="entry name" value="Argininosuccinate_lyase"/>
</dbReference>
<dbReference type="InterPro" id="IPR024083">
    <property type="entry name" value="Fumarase/histidase_N"/>
</dbReference>
<dbReference type="InterPro" id="IPR020557">
    <property type="entry name" value="Fumarate_lyase_CS"/>
</dbReference>
<dbReference type="InterPro" id="IPR000362">
    <property type="entry name" value="Fumarate_lyase_fam"/>
</dbReference>
<dbReference type="InterPro" id="IPR022761">
    <property type="entry name" value="Fumarate_lyase_N"/>
</dbReference>
<dbReference type="InterPro" id="IPR008948">
    <property type="entry name" value="L-Aspartase-like"/>
</dbReference>
<dbReference type="NCBIfam" id="TIGR00838">
    <property type="entry name" value="argH"/>
    <property type="match status" value="1"/>
</dbReference>
<dbReference type="PANTHER" id="PTHR43814">
    <property type="entry name" value="ARGININOSUCCINATE LYASE"/>
    <property type="match status" value="1"/>
</dbReference>
<dbReference type="PANTHER" id="PTHR43814:SF1">
    <property type="entry name" value="ARGININOSUCCINATE LYASE"/>
    <property type="match status" value="1"/>
</dbReference>
<dbReference type="Pfam" id="PF14698">
    <property type="entry name" value="ASL_C2"/>
    <property type="match status" value="1"/>
</dbReference>
<dbReference type="Pfam" id="PF00206">
    <property type="entry name" value="Lyase_1"/>
    <property type="match status" value="1"/>
</dbReference>
<dbReference type="PRINTS" id="PR00145">
    <property type="entry name" value="ARGSUCLYASE"/>
</dbReference>
<dbReference type="PRINTS" id="PR00149">
    <property type="entry name" value="FUMRATELYASE"/>
</dbReference>
<dbReference type="SUPFAM" id="SSF48557">
    <property type="entry name" value="L-aspartase-like"/>
    <property type="match status" value="1"/>
</dbReference>
<dbReference type="PROSITE" id="PS00163">
    <property type="entry name" value="FUMARATE_LYASES"/>
    <property type="match status" value="1"/>
</dbReference>
<proteinExistence type="inferred from homology"/>
<evidence type="ECO:0000255" key="1">
    <source>
        <dbReference type="HAMAP-Rule" id="MF_00006"/>
    </source>
</evidence>
<gene>
    <name evidence="1" type="primary">argH</name>
    <name type="ordered locus">Gmet_0209</name>
</gene>
<name>ARLY_GEOMG</name>
<keyword id="KW-0028">Amino-acid biosynthesis</keyword>
<keyword id="KW-0055">Arginine biosynthesis</keyword>
<keyword id="KW-0963">Cytoplasm</keyword>
<keyword id="KW-0456">Lyase</keyword>
<keyword id="KW-1185">Reference proteome</keyword>